<sequence>MSDIMDRVDNSTRKFKLGDNIHFEISSSANTQGNSHQIPRKQSQSTNSNHQEQSQQARNQSSQSNTNTTSRKKRKKHKKKSKISTVQAHLNNPEDDYPTSRVIKQAPNGDVIVESLEDEDENHHHHEYEEHEDSCEYHPSSKSNTRKNSSVNESTHNKIWDSASIEEQQRLKEFWESLDESKKLDLVKIDKDSIMRMFKNETRHHLQQQLSSSVSSQPQQQQSQQNVSTSSNNGSSSGINNNSNNNNGNNTNSCACKYCGRRNSIIEEELESIYDNHFDDIIDFIHEVRDINDLNALPGLLFGGFHMLEEERRLQKRQQKYKEKWNHSHHSTSVSPQPESQDNKQLKKSQDQNEMKAISIEDEMDKFKSHLAKMSISNSQSNPNQLSEIHLQLKSEDGNLTGTTESQLFNKLLDPKLFEALENMDLDKMKEMSKMDPKNLNNVNILEKATSLREIVRDLNNADRSSLQKGISHVSNMGKFFSNLATLNNAQNLPEIVASGGLDDQLSKGLSSFAEDLLKNDGNSFIGMMEALSESRTAREELLKETVISQNPQEQKSVSIGQSDQSGDVWVDDDDENNRVDVEIHACDNPHHHHHHHQHSNKQHDHHHCHNHRHRHRRRFEELDDEHDQENEDEELEDDEEDYYDEYDDDEEEDEEEDEDDDDIEEEGASDTESEISEEEKMQEIRRLFLIQVIKLFQERLKNAYKEKLSQDRTQKLIEELEAEENAKKERELKKLKQKEKAKEKKRLQQLAKEEERKRKEEELKAKEEEQRLQKEKLKAEQKKRKEEARLKKEEEKKKKIEEQKRKEEEHRKKVEAQQKREAEAKKLKEERRRKAEEERKQKEEEKKQKELLKKQKEEEKRQKELLRKQREEEKEKEAARLEEERTKLMVNDDDELARQIEVEKSKLSAAVANNPLLNHLYQPSPGSAPTTPSTANLPALSPLQSASAKLMSQQFEQQHLQQVSQEKLPQTSNIQSPNQQPHPSISSFQFSSEYNSNASVFHNNSSLLSNPSIMNSPRTTSTNLLNGNSPIVPNVTTNISLGATNTSNLSPWSSKSRLNSLSNSTQPFIGGNQFTQTNTASFNGVGNAVQQSGNFSPFNAFSDPLVSDAFKAAGPAGMNSNIWLNSSNVGNNSGNQSGISAPTTTSTNTSSRNNSIWGNTNPNKVTEPSLLNNNNNNNNGLISVESSGLWNSNGGNNQPARSSSVTGISSNLSTINPISSMDIELIQSTTFNCFQILQNSGQLEFGVAPLMKLFQNVKTILNKPSLTINQFLNCCTINSNVYIFSLKYDDFGNVTHVEVAYKNVPRTSPPPPPGNIVQNQHQVSSPSFAAATASSSSLATSNVPLGFINSGGSPTGLFNDININHGGTSFLPPIGESSTNDAGSSNVGNSGFGRRLWN</sequence>
<reference key="1">
    <citation type="journal article" date="2004" name="Proc. Natl. Acad. Sci. U.S.A.">
        <title>The diploid genome sequence of Candida albicans.</title>
        <authorList>
            <person name="Jones T."/>
            <person name="Federspiel N.A."/>
            <person name="Chibana H."/>
            <person name="Dungan J."/>
            <person name="Kalman S."/>
            <person name="Magee B.B."/>
            <person name="Newport G."/>
            <person name="Thorstenson Y.R."/>
            <person name="Agabian N."/>
            <person name="Magee P.T."/>
            <person name="Davis R.W."/>
            <person name="Scherer S."/>
        </authorList>
    </citation>
    <scope>NUCLEOTIDE SEQUENCE [LARGE SCALE GENOMIC DNA]</scope>
    <source>
        <strain>SC5314 / ATCC MYA-2876</strain>
    </source>
</reference>
<reference key="2">
    <citation type="journal article" date="2007" name="Genome Biol.">
        <title>Assembly of the Candida albicans genome into sixteen supercontigs aligned on the eight chromosomes.</title>
        <authorList>
            <person name="van het Hoog M."/>
            <person name="Rast T.J."/>
            <person name="Martchenko M."/>
            <person name="Grindle S."/>
            <person name="Dignard D."/>
            <person name="Hogues H."/>
            <person name="Cuomo C."/>
            <person name="Berriman M."/>
            <person name="Scherer S."/>
            <person name="Magee B.B."/>
            <person name="Whiteway M."/>
            <person name="Chibana H."/>
            <person name="Nantel A."/>
            <person name="Magee P.T."/>
        </authorList>
    </citation>
    <scope>GENOME REANNOTATION</scope>
    <source>
        <strain>SC5314 / ATCC MYA-2876</strain>
    </source>
</reference>
<reference key="3">
    <citation type="journal article" date="2013" name="Genome Biol.">
        <title>Assembly of a phased diploid Candida albicans genome facilitates allele-specific measurements and provides a simple model for repeat and indel structure.</title>
        <authorList>
            <person name="Muzzey D."/>
            <person name="Schwartz K."/>
            <person name="Weissman J.S."/>
            <person name="Sherlock G."/>
        </authorList>
    </citation>
    <scope>NUCLEOTIDE SEQUENCE [LARGE SCALE GENOMIC DNA]</scope>
    <scope>GENOME REANNOTATION</scope>
    <source>
        <strain>SC5314 / ATCC MYA-2876</strain>
    </source>
</reference>
<protein>
    <recommendedName>
        <fullName>Stress response protein NST1</fullName>
    </recommendedName>
</protein>
<organism>
    <name type="scientific">Candida albicans (strain SC5314 / ATCC MYA-2876)</name>
    <name type="common">Yeast</name>
    <dbReference type="NCBI Taxonomy" id="237561"/>
    <lineage>
        <taxon>Eukaryota</taxon>
        <taxon>Fungi</taxon>
        <taxon>Dikarya</taxon>
        <taxon>Ascomycota</taxon>
        <taxon>Saccharomycotina</taxon>
        <taxon>Pichiomycetes</taxon>
        <taxon>Debaryomycetaceae</taxon>
        <taxon>Candida/Lodderomyces clade</taxon>
        <taxon>Candida</taxon>
    </lineage>
</organism>
<name>NST1_CANAL</name>
<keyword id="KW-0175">Coiled coil</keyword>
<keyword id="KW-0963">Cytoplasm</keyword>
<keyword id="KW-1185">Reference proteome</keyword>
<keyword id="KW-0346">Stress response</keyword>
<feature type="chain" id="PRO_0000324444" description="Stress response protein NST1">
    <location>
        <begin position="1"/>
        <end position="1399"/>
    </location>
</feature>
<feature type="region of interest" description="Disordered" evidence="3">
    <location>
        <begin position="28"/>
        <end position="105"/>
    </location>
</feature>
<feature type="region of interest" description="Disordered" evidence="3">
    <location>
        <begin position="119"/>
        <end position="155"/>
    </location>
</feature>
<feature type="region of interest" description="Disordered" evidence="3">
    <location>
        <begin position="202"/>
        <end position="249"/>
    </location>
</feature>
<feature type="region of interest" description="Disordered" evidence="3">
    <location>
        <begin position="318"/>
        <end position="353"/>
    </location>
</feature>
<feature type="region of interest" description="Disordered" evidence="3">
    <location>
        <begin position="546"/>
        <end position="574"/>
    </location>
</feature>
<feature type="region of interest" description="Disordered" evidence="3">
    <location>
        <begin position="589"/>
        <end position="681"/>
    </location>
</feature>
<feature type="region of interest" description="Disordered" evidence="3">
    <location>
        <begin position="722"/>
        <end position="894"/>
    </location>
</feature>
<feature type="region of interest" description="Disordered" evidence="3">
    <location>
        <begin position="949"/>
        <end position="990"/>
    </location>
</feature>
<feature type="region of interest" description="Disordered" evidence="3">
    <location>
        <begin position="1134"/>
        <end position="1178"/>
    </location>
</feature>
<feature type="region of interest" description="Disordered" evidence="3">
    <location>
        <begin position="1373"/>
        <end position="1399"/>
    </location>
</feature>
<feature type="coiled-coil region" evidence="2">
    <location>
        <begin position="708"/>
        <end position="896"/>
    </location>
</feature>
<feature type="compositionally biased region" description="Polar residues" evidence="3">
    <location>
        <begin position="28"/>
        <end position="52"/>
    </location>
</feature>
<feature type="compositionally biased region" description="Low complexity" evidence="3">
    <location>
        <begin position="53"/>
        <end position="69"/>
    </location>
</feature>
<feature type="compositionally biased region" description="Basic residues" evidence="3">
    <location>
        <begin position="70"/>
        <end position="82"/>
    </location>
</feature>
<feature type="compositionally biased region" description="Polar residues" evidence="3">
    <location>
        <begin position="140"/>
        <end position="154"/>
    </location>
</feature>
<feature type="compositionally biased region" description="Low complexity" evidence="3">
    <location>
        <begin position="207"/>
        <end position="249"/>
    </location>
</feature>
<feature type="compositionally biased region" description="Polar residues" evidence="3">
    <location>
        <begin position="331"/>
        <end position="340"/>
    </location>
</feature>
<feature type="compositionally biased region" description="Basic and acidic residues" evidence="3">
    <location>
        <begin position="341"/>
        <end position="353"/>
    </location>
</feature>
<feature type="compositionally biased region" description="Polar residues" evidence="3">
    <location>
        <begin position="547"/>
        <end position="566"/>
    </location>
</feature>
<feature type="compositionally biased region" description="Basic residues" evidence="3">
    <location>
        <begin position="591"/>
        <end position="618"/>
    </location>
</feature>
<feature type="compositionally biased region" description="Acidic residues" evidence="3">
    <location>
        <begin position="622"/>
        <end position="678"/>
    </location>
</feature>
<feature type="compositionally biased region" description="Basic and acidic residues" evidence="3">
    <location>
        <begin position="722"/>
        <end position="743"/>
    </location>
</feature>
<feature type="compositionally biased region" description="Basic and acidic residues" evidence="3">
    <location>
        <begin position="752"/>
        <end position="888"/>
    </location>
</feature>
<feature type="compositionally biased region" description="Low complexity" evidence="3">
    <location>
        <begin position="1134"/>
        <end position="1156"/>
    </location>
</feature>
<feature type="compositionally biased region" description="Polar residues" evidence="3">
    <location>
        <begin position="1157"/>
        <end position="1172"/>
    </location>
</feature>
<feature type="compositionally biased region" description="Polar residues" evidence="3">
    <location>
        <begin position="1377"/>
        <end position="1390"/>
    </location>
</feature>
<accession>Q5A2K0</accession>
<accession>A0A1D8PI57</accession>
<proteinExistence type="inferred from homology"/>
<comment type="function">
    <text evidence="1">May act as a negative regulator of salt tolerance.</text>
</comment>
<comment type="subcellular location">
    <subcellularLocation>
        <location evidence="1">Cytoplasm</location>
    </subcellularLocation>
</comment>
<comment type="similarity">
    <text evidence="4">Belongs to the NST1 family.</text>
</comment>
<gene>
    <name type="primary">NST1</name>
    <name type="ordered locus">CAALFM_C207740WA</name>
    <name type="ORF">CaO19.2208</name>
    <name type="ORF">CaO19.9753</name>
</gene>
<evidence type="ECO:0000250" key="1"/>
<evidence type="ECO:0000255" key="2"/>
<evidence type="ECO:0000256" key="3">
    <source>
        <dbReference type="SAM" id="MobiDB-lite"/>
    </source>
</evidence>
<evidence type="ECO:0000305" key="4"/>
<dbReference type="EMBL" id="CP017624">
    <property type="protein sequence ID" value="AOW27772.1"/>
    <property type="molecule type" value="Genomic_DNA"/>
</dbReference>
<dbReference type="RefSeq" id="XP_716048.2">
    <property type="nucleotide sequence ID" value="XM_710955.2"/>
</dbReference>
<dbReference type="SMR" id="Q5A2K0"/>
<dbReference type="FunCoup" id="Q5A2K0">
    <property type="interactions" value="22"/>
</dbReference>
<dbReference type="STRING" id="237561.Q5A2K0"/>
<dbReference type="EnsemblFungi" id="C2_07740W_A-T">
    <property type="protein sequence ID" value="C2_07740W_A-T-p1"/>
    <property type="gene ID" value="C2_07740W_A"/>
</dbReference>
<dbReference type="GeneID" id="3642302"/>
<dbReference type="KEGG" id="cal:CAALFM_C207740WA"/>
<dbReference type="CGD" id="CAL0000177886">
    <property type="gene designation" value="orf19.9753"/>
</dbReference>
<dbReference type="VEuPathDB" id="FungiDB:C2_07740W_A"/>
<dbReference type="eggNOG" id="ENOG502QSSK">
    <property type="taxonomic scope" value="Eukaryota"/>
</dbReference>
<dbReference type="HOGENOM" id="CLU_003284_0_0_1"/>
<dbReference type="InParanoid" id="Q5A2K0"/>
<dbReference type="OrthoDB" id="21629at2759"/>
<dbReference type="PRO" id="PR:Q5A2K0"/>
<dbReference type="Proteomes" id="UP000000559">
    <property type="component" value="Chromosome 2"/>
</dbReference>
<dbReference type="GO" id="GO:0005737">
    <property type="term" value="C:cytoplasm"/>
    <property type="evidence" value="ECO:0007669"/>
    <property type="project" value="UniProtKB-SubCell"/>
</dbReference>
<dbReference type="InterPro" id="IPR025279">
    <property type="entry name" value="NST1"/>
</dbReference>
<dbReference type="Pfam" id="PF13945">
    <property type="entry name" value="NST1"/>
    <property type="match status" value="2"/>
</dbReference>